<proteinExistence type="evidence at transcript level"/>
<reference key="1">
    <citation type="submission" date="2003-01" db="EMBL/GenBank/DDBJ databases">
        <title>ST18 is a breast cancer candidate tumor suppressor gene.</title>
        <authorList>
            <person name="Jandrig B."/>
            <person name="Seitz S."/>
            <person name="Hinzmann B."/>
            <person name="Arnold W."/>
        </authorList>
    </citation>
    <scope>NUCLEOTIDE SEQUENCE [MRNA]</scope>
    <source>
        <strain>C57BL/6J</strain>
    </source>
</reference>
<reference key="2">
    <citation type="journal article" date="2003" name="DNA Res.">
        <title>Prediction of the coding sequences of mouse homologues of KIAA gene: II. The complete nucleotide sequences of 400 mouse KIAA-homologous cDNAs identified by screening of terminal sequences of cDNA clones randomly sampled from size-fractionated libraries.</title>
        <authorList>
            <person name="Okazaki N."/>
            <person name="Kikuno R."/>
            <person name="Ohara R."/>
            <person name="Inamoto S."/>
            <person name="Aizawa H."/>
            <person name="Yuasa S."/>
            <person name="Nakajima D."/>
            <person name="Nagase T."/>
            <person name="Ohara O."/>
            <person name="Koga H."/>
        </authorList>
    </citation>
    <scope>NUCLEOTIDE SEQUENCE [LARGE SCALE MRNA]</scope>
    <source>
        <tissue>Brain</tissue>
    </source>
</reference>
<reference key="3">
    <citation type="journal article" date="2005" name="Science">
        <title>The transcriptional landscape of the mammalian genome.</title>
        <authorList>
            <person name="Carninci P."/>
            <person name="Kasukawa T."/>
            <person name="Katayama S."/>
            <person name="Gough J."/>
            <person name="Frith M.C."/>
            <person name="Maeda N."/>
            <person name="Oyama R."/>
            <person name="Ravasi T."/>
            <person name="Lenhard B."/>
            <person name="Wells C."/>
            <person name="Kodzius R."/>
            <person name="Shimokawa K."/>
            <person name="Bajic V.B."/>
            <person name="Brenner S.E."/>
            <person name="Batalov S."/>
            <person name="Forrest A.R."/>
            <person name="Zavolan M."/>
            <person name="Davis M.J."/>
            <person name="Wilming L.G."/>
            <person name="Aidinis V."/>
            <person name="Allen J.E."/>
            <person name="Ambesi-Impiombato A."/>
            <person name="Apweiler R."/>
            <person name="Aturaliya R.N."/>
            <person name="Bailey T.L."/>
            <person name="Bansal M."/>
            <person name="Baxter L."/>
            <person name="Beisel K.W."/>
            <person name="Bersano T."/>
            <person name="Bono H."/>
            <person name="Chalk A.M."/>
            <person name="Chiu K.P."/>
            <person name="Choudhary V."/>
            <person name="Christoffels A."/>
            <person name="Clutterbuck D.R."/>
            <person name="Crowe M.L."/>
            <person name="Dalla E."/>
            <person name="Dalrymple B.P."/>
            <person name="de Bono B."/>
            <person name="Della Gatta G."/>
            <person name="di Bernardo D."/>
            <person name="Down T."/>
            <person name="Engstrom P."/>
            <person name="Fagiolini M."/>
            <person name="Faulkner G."/>
            <person name="Fletcher C.F."/>
            <person name="Fukushima T."/>
            <person name="Furuno M."/>
            <person name="Futaki S."/>
            <person name="Gariboldi M."/>
            <person name="Georgii-Hemming P."/>
            <person name="Gingeras T.R."/>
            <person name="Gojobori T."/>
            <person name="Green R.E."/>
            <person name="Gustincich S."/>
            <person name="Harbers M."/>
            <person name="Hayashi Y."/>
            <person name="Hensch T.K."/>
            <person name="Hirokawa N."/>
            <person name="Hill D."/>
            <person name="Huminiecki L."/>
            <person name="Iacono M."/>
            <person name="Ikeo K."/>
            <person name="Iwama A."/>
            <person name="Ishikawa T."/>
            <person name="Jakt M."/>
            <person name="Kanapin A."/>
            <person name="Katoh M."/>
            <person name="Kawasawa Y."/>
            <person name="Kelso J."/>
            <person name="Kitamura H."/>
            <person name="Kitano H."/>
            <person name="Kollias G."/>
            <person name="Krishnan S.P."/>
            <person name="Kruger A."/>
            <person name="Kummerfeld S.K."/>
            <person name="Kurochkin I.V."/>
            <person name="Lareau L.F."/>
            <person name="Lazarevic D."/>
            <person name="Lipovich L."/>
            <person name="Liu J."/>
            <person name="Liuni S."/>
            <person name="McWilliam S."/>
            <person name="Madan Babu M."/>
            <person name="Madera M."/>
            <person name="Marchionni L."/>
            <person name="Matsuda H."/>
            <person name="Matsuzawa S."/>
            <person name="Miki H."/>
            <person name="Mignone F."/>
            <person name="Miyake S."/>
            <person name="Morris K."/>
            <person name="Mottagui-Tabar S."/>
            <person name="Mulder N."/>
            <person name="Nakano N."/>
            <person name="Nakauchi H."/>
            <person name="Ng P."/>
            <person name="Nilsson R."/>
            <person name="Nishiguchi S."/>
            <person name="Nishikawa S."/>
            <person name="Nori F."/>
            <person name="Ohara O."/>
            <person name="Okazaki Y."/>
            <person name="Orlando V."/>
            <person name="Pang K.C."/>
            <person name="Pavan W.J."/>
            <person name="Pavesi G."/>
            <person name="Pesole G."/>
            <person name="Petrovsky N."/>
            <person name="Piazza S."/>
            <person name="Reed J."/>
            <person name="Reid J.F."/>
            <person name="Ring B.Z."/>
            <person name="Ringwald M."/>
            <person name="Rost B."/>
            <person name="Ruan Y."/>
            <person name="Salzberg S.L."/>
            <person name="Sandelin A."/>
            <person name="Schneider C."/>
            <person name="Schoenbach C."/>
            <person name="Sekiguchi K."/>
            <person name="Semple C.A."/>
            <person name="Seno S."/>
            <person name="Sessa L."/>
            <person name="Sheng Y."/>
            <person name="Shibata Y."/>
            <person name="Shimada H."/>
            <person name="Shimada K."/>
            <person name="Silva D."/>
            <person name="Sinclair B."/>
            <person name="Sperling S."/>
            <person name="Stupka E."/>
            <person name="Sugiura K."/>
            <person name="Sultana R."/>
            <person name="Takenaka Y."/>
            <person name="Taki K."/>
            <person name="Tammoja K."/>
            <person name="Tan S.L."/>
            <person name="Tang S."/>
            <person name="Taylor M.S."/>
            <person name="Tegner J."/>
            <person name="Teichmann S.A."/>
            <person name="Ueda H.R."/>
            <person name="van Nimwegen E."/>
            <person name="Verardo R."/>
            <person name="Wei C.L."/>
            <person name="Yagi K."/>
            <person name="Yamanishi H."/>
            <person name="Zabarovsky E."/>
            <person name="Zhu S."/>
            <person name="Zimmer A."/>
            <person name="Hide W."/>
            <person name="Bult C."/>
            <person name="Grimmond S.M."/>
            <person name="Teasdale R.D."/>
            <person name="Liu E.T."/>
            <person name="Brusic V."/>
            <person name="Quackenbush J."/>
            <person name="Wahlestedt C."/>
            <person name="Mattick J.S."/>
            <person name="Hume D.A."/>
            <person name="Kai C."/>
            <person name="Sasaki D."/>
            <person name="Tomaru Y."/>
            <person name="Fukuda S."/>
            <person name="Kanamori-Katayama M."/>
            <person name="Suzuki M."/>
            <person name="Aoki J."/>
            <person name="Arakawa T."/>
            <person name="Iida J."/>
            <person name="Imamura K."/>
            <person name="Itoh M."/>
            <person name="Kato T."/>
            <person name="Kawaji H."/>
            <person name="Kawagashira N."/>
            <person name="Kawashima T."/>
            <person name="Kojima M."/>
            <person name="Kondo S."/>
            <person name="Konno H."/>
            <person name="Nakano K."/>
            <person name="Ninomiya N."/>
            <person name="Nishio T."/>
            <person name="Okada M."/>
            <person name="Plessy C."/>
            <person name="Shibata K."/>
            <person name="Shiraki T."/>
            <person name="Suzuki S."/>
            <person name="Tagami M."/>
            <person name="Waki K."/>
            <person name="Watahiki A."/>
            <person name="Okamura-Oho Y."/>
            <person name="Suzuki H."/>
            <person name="Kawai J."/>
            <person name="Hayashizaki Y."/>
        </authorList>
    </citation>
    <scope>NUCLEOTIDE SEQUENCE [LARGE SCALE MRNA]</scope>
    <source>
        <strain>C57BL/6J</strain>
        <tissue>Brain</tissue>
        <tissue>Cerebellum</tissue>
        <tissue>Embryo</tissue>
        <tissue>Embryonic spinal cord</tissue>
    </source>
</reference>
<reference key="4">
    <citation type="journal article" date="2004" name="Genome Res.">
        <title>The status, quality, and expansion of the NIH full-length cDNA project: the Mammalian Gene Collection (MGC).</title>
        <authorList>
            <consortium name="The MGC Project Team"/>
        </authorList>
    </citation>
    <scope>NUCLEOTIDE SEQUENCE [LARGE SCALE MRNA] OF 289-1045</scope>
    <source>
        <tissue>Eye</tissue>
    </source>
</reference>
<dbReference type="EMBL" id="AJ536155">
    <property type="protein sequence ID" value="CAD60089.1"/>
    <property type="molecule type" value="mRNA"/>
</dbReference>
<dbReference type="EMBL" id="AK122303">
    <property type="protein sequence ID" value="BAC65585.1"/>
    <property type="status" value="ALT_INIT"/>
    <property type="molecule type" value="mRNA"/>
</dbReference>
<dbReference type="EMBL" id="AK133743">
    <property type="protein sequence ID" value="BAE21817.1"/>
    <property type="molecule type" value="mRNA"/>
</dbReference>
<dbReference type="EMBL" id="AK137440">
    <property type="protein sequence ID" value="BAE23351.1"/>
    <property type="molecule type" value="mRNA"/>
</dbReference>
<dbReference type="EMBL" id="AK141513">
    <property type="protein sequence ID" value="BAE24709.1"/>
    <property type="molecule type" value="mRNA"/>
</dbReference>
<dbReference type="EMBL" id="AK147320">
    <property type="protein sequence ID" value="BAE27844.1"/>
    <property type="molecule type" value="mRNA"/>
</dbReference>
<dbReference type="EMBL" id="AK147664">
    <property type="protein sequence ID" value="BAE28057.1"/>
    <property type="molecule type" value="mRNA"/>
</dbReference>
<dbReference type="EMBL" id="BC032273">
    <property type="protein sequence ID" value="AAH32273.1"/>
    <property type="status" value="ALT_INIT"/>
    <property type="molecule type" value="mRNA"/>
</dbReference>
<dbReference type="CCDS" id="CCDS14810.1"/>
<dbReference type="RefSeq" id="NP_001231621.1">
    <property type="nucleotide sequence ID" value="NM_001244692.1"/>
</dbReference>
<dbReference type="RefSeq" id="NP_001231622.1">
    <property type="nucleotide sequence ID" value="NM_001244693.1"/>
</dbReference>
<dbReference type="RefSeq" id="NP_776293.1">
    <property type="nucleotide sequence ID" value="NM_173868.2"/>
</dbReference>
<dbReference type="RefSeq" id="XP_006495564.1">
    <property type="nucleotide sequence ID" value="XM_006495501.4"/>
</dbReference>
<dbReference type="RefSeq" id="XP_006495565.1">
    <property type="nucleotide sequence ID" value="XM_006495502.5"/>
</dbReference>
<dbReference type="RefSeq" id="XP_006495566.1">
    <property type="nucleotide sequence ID" value="XM_006495503.5"/>
</dbReference>
<dbReference type="RefSeq" id="XP_006495567.1">
    <property type="nucleotide sequence ID" value="XM_006495504.4"/>
</dbReference>
<dbReference type="RefSeq" id="XP_011236672.1">
    <property type="nucleotide sequence ID" value="XM_011238370.1"/>
</dbReference>
<dbReference type="RefSeq" id="XP_011236673.1">
    <property type="nucleotide sequence ID" value="XM_011238371.4"/>
</dbReference>
<dbReference type="RefSeq" id="XP_011236674.1">
    <property type="nucleotide sequence ID" value="XM_011238372.3"/>
</dbReference>
<dbReference type="RefSeq" id="XP_011236675.1">
    <property type="nucleotide sequence ID" value="XM_011238373.3"/>
</dbReference>
<dbReference type="RefSeq" id="XP_030109821.1">
    <property type="nucleotide sequence ID" value="XM_030253961.2"/>
</dbReference>
<dbReference type="RefSeq" id="XP_030109823.1">
    <property type="nucleotide sequence ID" value="XM_030253963.2"/>
</dbReference>
<dbReference type="RefSeq" id="XP_030109824.1">
    <property type="nucleotide sequence ID" value="XM_030253964.2"/>
</dbReference>
<dbReference type="RefSeq" id="XP_036020573.1">
    <property type="nucleotide sequence ID" value="XM_036164680.1"/>
</dbReference>
<dbReference type="RefSeq" id="XP_036020574.1">
    <property type="nucleotide sequence ID" value="XM_036164681.1"/>
</dbReference>
<dbReference type="RefSeq" id="XP_036020575.1">
    <property type="nucleotide sequence ID" value="XM_036164682.1"/>
</dbReference>
<dbReference type="RefSeq" id="XP_036020576.1">
    <property type="nucleotide sequence ID" value="XM_036164683.1"/>
</dbReference>
<dbReference type="RefSeq" id="XP_036020577.1">
    <property type="nucleotide sequence ID" value="XM_036164684.1"/>
</dbReference>
<dbReference type="SMR" id="Q80TY4"/>
<dbReference type="BioGRID" id="232229">
    <property type="interactions" value="6"/>
</dbReference>
<dbReference type="FunCoup" id="Q80TY4">
    <property type="interactions" value="518"/>
</dbReference>
<dbReference type="STRING" id="10090.ENSMUSP00000118322"/>
<dbReference type="GlyGen" id="Q80TY4">
    <property type="glycosylation" value="5 sites, 1 O-linked glycan (1 site)"/>
</dbReference>
<dbReference type="iPTMnet" id="Q80TY4"/>
<dbReference type="PhosphoSitePlus" id="Q80TY4"/>
<dbReference type="PaxDb" id="10090-ENSMUSP00000120298"/>
<dbReference type="ProteomicsDB" id="258630"/>
<dbReference type="Antibodypedia" id="24412">
    <property type="antibodies" value="225 antibodies from 26 providers"/>
</dbReference>
<dbReference type="DNASU" id="240690"/>
<dbReference type="Ensembl" id="ENSMUST00000043578.13">
    <property type="protein sequence ID" value="ENSMUSP00000042056.7"/>
    <property type="gene ID" value="ENSMUSG00000033740.18"/>
</dbReference>
<dbReference type="Ensembl" id="ENSMUST00000131494.8">
    <property type="protein sequence ID" value="ENSMUSP00000117789.2"/>
    <property type="gene ID" value="ENSMUSG00000033740.18"/>
</dbReference>
<dbReference type="Ensembl" id="ENSMUST00000140079.8">
    <property type="protein sequence ID" value="ENSMUSP00000118322.2"/>
    <property type="gene ID" value="ENSMUSG00000033740.18"/>
</dbReference>
<dbReference type="Ensembl" id="ENSMUST00000150761.8">
    <property type="protein sequence ID" value="ENSMUSP00000120298.2"/>
    <property type="gene ID" value="ENSMUSG00000033740.18"/>
</dbReference>
<dbReference type="Ensembl" id="ENSMUST00000151281.8">
    <property type="protein sequence ID" value="ENSMUSP00000122055.2"/>
    <property type="gene ID" value="ENSMUSG00000033740.18"/>
</dbReference>
<dbReference type="Ensembl" id="ENSMUST00000163727.4">
    <property type="protein sequence ID" value="ENSMUSP00000131417.3"/>
    <property type="gene ID" value="ENSMUSG00000033740.18"/>
</dbReference>
<dbReference type="GeneID" id="240690"/>
<dbReference type="KEGG" id="mmu:240690"/>
<dbReference type="UCSC" id="uc007afw.1">
    <property type="organism name" value="mouse"/>
</dbReference>
<dbReference type="AGR" id="MGI:2446700"/>
<dbReference type="CTD" id="9705"/>
<dbReference type="MGI" id="MGI:2446700">
    <property type="gene designation" value="St18"/>
</dbReference>
<dbReference type="VEuPathDB" id="HostDB:ENSMUSG00000033740"/>
<dbReference type="eggNOG" id="KOG3803">
    <property type="taxonomic scope" value="Eukaryota"/>
</dbReference>
<dbReference type="GeneTree" id="ENSGT00940000159905"/>
<dbReference type="HOGENOM" id="CLU_007226_0_0_1"/>
<dbReference type="InParanoid" id="Q80TY4"/>
<dbReference type="OMA" id="RYTCYQE"/>
<dbReference type="OrthoDB" id="10069059at2759"/>
<dbReference type="PhylomeDB" id="Q80TY4"/>
<dbReference type="TreeFam" id="TF317299"/>
<dbReference type="BioGRID-ORCS" id="240690">
    <property type="hits" value="0 hits in 76 CRISPR screens"/>
</dbReference>
<dbReference type="ChiTaRS" id="St18">
    <property type="organism name" value="mouse"/>
</dbReference>
<dbReference type="PRO" id="PR:Q80TY4"/>
<dbReference type="Proteomes" id="UP000000589">
    <property type="component" value="Chromosome 1"/>
</dbReference>
<dbReference type="RNAct" id="Q80TY4">
    <property type="molecule type" value="protein"/>
</dbReference>
<dbReference type="Bgee" id="ENSMUSG00000033740">
    <property type="expression patterns" value="Expressed in cerebellum lobe and 121 other cell types or tissues"/>
</dbReference>
<dbReference type="ExpressionAtlas" id="Q80TY4">
    <property type="expression patterns" value="baseline and differential"/>
</dbReference>
<dbReference type="GO" id="GO:0005634">
    <property type="term" value="C:nucleus"/>
    <property type="evidence" value="ECO:0007669"/>
    <property type="project" value="UniProtKB-SubCell"/>
</dbReference>
<dbReference type="GO" id="GO:0032993">
    <property type="term" value="C:protein-DNA complex"/>
    <property type="evidence" value="ECO:0007669"/>
    <property type="project" value="Ensembl"/>
</dbReference>
<dbReference type="GO" id="GO:0000978">
    <property type="term" value="F:RNA polymerase II cis-regulatory region sequence-specific DNA binding"/>
    <property type="evidence" value="ECO:0007669"/>
    <property type="project" value="Ensembl"/>
</dbReference>
<dbReference type="GO" id="GO:0008270">
    <property type="term" value="F:zinc ion binding"/>
    <property type="evidence" value="ECO:0007669"/>
    <property type="project" value="UniProtKB-KW"/>
</dbReference>
<dbReference type="GO" id="GO:0070498">
    <property type="term" value="P:interleukin-1-mediated signaling pathway"/>
    <property type="evidence" value="ECO:0007669"/>
    <property type="project" value="Ensembl"/>
</dbReference>
<dbReference type="GO" id="GO:0070102">
    <property type="term" value="P:interleukin-6-mediated signaling pathway"/>
    <property type="evidence" value="ECO:0007669"/>
    <property type="project" value="Ensembl"/>
</dbReference>
<dbReference type="GO" id="GO:0008285">
    <property type="term" value="P:negative regulation of cell population proliferation"/>
    <property type="evidence" value="ECO:0007669"/>
    <property type="project" value="Ensembl"/>
</dbReference>
<dbReference type="GO" id="GO:0045944">
    <property type="term" value="P:positive regulation of transcription by RNA polymerase II"/>
    <property type="evidence" value="ECO:0007669"/>
    <property type="project" value="Ensembl"/>
</dbReference>
<dbReference type="GO" id="GO:0033209">
    <property type="term" value="P:tumor necrosis factor-mediated signaling pathway"/>
    <property type="evidence" value="ECO:0007669"/>
    <property type="project" value="Ensembl"/>
</dbReference>
<dbReference type="FunFam" id="4.10.320.30:FF:000001">
    <property type="entry name" value="Myelin transcription factor 1-like, a"/>
    <property type="match status" value="6"/>
</dbReference>
<dbReference type="Gene3D" id="4.10.320.30">
    <property type="match status" value="6"/>
</dbReference>
<dbReference type="InterPro" id="IPR013681">
    <property type="entry name" value="Myelin_TF"/>
</dbReference>
<dbReference type="InterPro" id="IPR002515">
    <property type="entry name" value="Znf_C2H2C"/>
</dbReference>
<dbReference type="InterPro" id="IPR036060">
    <property type="entry name" value="Znf_C2H2C_sf"/>
</dbReference>
<dbReference type="PANTHER" id="PTHR10816">
    <property type="entry name" value="MYELIN TRANSCRIPTION FACTOR 1-RELATED"/>
    <property type="match status" value="1"/>
</dbReference>
<dbReference type="PANTHER" id="PTHR10816:SF9">
    <property type="entry name" value="SUPPRESSION OF TUMORIGENICITY 18 PROTEIN"/>
    <property type="match status" value="1"/>
</dbReference>
<dbReference type="Pfam" id="PF08474">
    <property type="entry name" value="MYT1"/>
    <property type="match status" value="1"/>
</dbReference>
<dbReference type="Pfam" id="PF01530">
    <property type="entry name" value="zf-C2HC"/>
    <property type="match status" value="6"/>
</dbReference>
<dbReference type="SUPFAM" id="SSF103637">
    <property type="entry name" value="CCHHC domain"/>
    <property type="match status" value="6"/>
</dbReference>
<dbReference type="PROSITE" id="PS51802">
    <property type="entry name" value="ZF_CCHHC"/>
    <property type="match status" value="6"/>
</dbReference>
<sequence length="1045" mass="114750">MDAEVEDKTLHTLSKGTEVPMDSLIPELRVPYDCSMAKKRRAEEQASGVPINKRKSLLMKPRHYSPDMGCKESPDNRNEDDGLLETNDHATADEIMVKSMDETLHLPAQDSSLQKKDQYTCYPELMVKSLVHLGKFEESESVQTTCENLNGSSIQSLKAESDEAHEGSMVHSDNGRDKVHHSQPPFCSSGDSESDSDSAENGWGNGSNSSEDTDTHKGPKHKLTYNRKDLLEVPEIKAEDDKFIPCENRCDSDTDGRDPQNSHMEPLVVKAQPSFPEVEEGESLATVTEEPAEVEKAKGNLSLLEQAIALQAERGSVFHHTYKELDRFFLDHLARERRQPRVTDANGRQIFTNKHSPRPERREAKCPIPGCDGTGHVTGLYPHHRSLSGCPHKVRVPLEILAMHENVLKCPTPGCTGRGHVNSNRNTHRSLSGCPIAAAEKLAMTQDKSQLDSSQTGQCPEQAHRVNLVKQIEFNFRSHAITSPRASASKEQEKFGKVPFDYASFDAQVFGKRPLLQTGQGQKAPPFPESKHFSNPVKFPNGLPSAGAHTQSTVRASSYGHGQYSEDTHIAAAAAILNLSTRCREATDILSNKPQSLRAKGAEIEVDENGTLDLSMKKNRIHDKSIPPTSSPTTITTPSSSPFNASSLLVNAAFYQALSDQEGWNVPINYSKSHGKTEEEKEKDPVNFLENLEEKKFAGEASIPSPKPKLHTRDLKKELITCPTPGCDGSGHVTGNYASHRSVSGCPLADKTLKSLMAANSQELKCPTPGCDGSGHVTGNYASHRSLSGCPRARKGGIKMTPTKEEKEDSELRCPVIGCDGQGHISGKYTSHRTASGCPLAAKRQKENPLNGAPLSWKLNKQELPHCPLPGCNGLGHVNNVFVTHRSLSGCPLNAQAIKKVKVSEELMTIKLKATGGIDGDEEIRHLDEEIKELNESNLKIEADMMKLQTQITSMESNLKTIEEENKLIEQSNESLLKELAGLSQALISSLADIQLPQMGPINEQNFEAYVNTLTDMYSNLEQDYSPECKALLESIKQAVKGIHV</sequence>
<gene>
    <name type="primary">St18</name>
    <name type="synonym">Kiaa0535</name>
</gene>
<keyword id="KW-0175">Coiled coil</keyword>
<keyword id="KW-0238">DNA-binding</keyword>
<keyword id="KW-0479">Metal-binding</keyword>
<keyword id="KW-0539">Nucleus</keyword>
<keyword id="KW-1185">Reference proteome</keyword>
<keyword id="KW-0677">Repeat</keyword>
<keyword id="KW-0678">Repressor</keyword>
<keyword id="KW-0804">Transcription</keyword>
<keyword id="KW-0805">Transcription regulation</keyword>
<keyword id="KW-0862">Zinc</keyword>
<keyword id="KW-0863">Zinc-finger</keyword>
<feature type="chain" id="PRO_0000234031" description="Suppression of tumorigenicity 18 protein">
    <location>
        <begin position="1"/>
        <end position="1045"/>
    </location>
</feature>
<feature type="zinc finger region" description="CCHHC-type 1" evidence="3">
    <location>
        <begin position="357"/>
        <end position="400"/>
    </location>
</feature>
<feature type="zinc finger region" description="CCHHC-type 2" evidence="3">
    <location>
        <begin position="401"/>
        <end position="444"/>
    </location>
</feature>
<feature type="zinc finger region" description="CCHHC-type 3" evidence="3">
    <location>
        <begin position="713"/>
        <end position="756"/>
    </location>
</feature>
<feature type="zinc finger region" description="CCHHC-type 4" evidence="3">
    <location>
        <begin position="757"/>
        <end position="800"/>
    </location>
</feature>
<feature type="zinc finger region" description="CCHHC-type 5" evidence="3">
    <location>
        <begin position="805"/>
        <end position="848"/>
    </location>
</feature>
<feature type="zinc finger region" description="CCHHC-type 6" evidence="3">
    <location>
        <begin position="858"/>
        <end position="901"/>
    </location>
</feature>
<feature type="region of interest" description="Disordered" evidence="4">
    <location>
        <begin position="38"/>
        <end position="90"/>
    </location>
</feature>
<feature type="region of interest" description="Disordered" evidence="4">
    <location>
        <begin position="158"/>
        <end position="228"/>
    </location>
</feature>
<feature type="region of interest" description="Disordered" evidence="4">
    <location>
        <begin position="340"/>
        <end position="364"/>
    </location>
</feature>
<feature type="coiled-coil region" evidence="2">
    <location>
        <begin position="918"/>
        <end position="987"/>
    </location>
</feature>
<feature type="compositionally biased region" description="Basic residues" evidence="4">
    <location>
        <begin position="52"/>
        <end position="63"/>
    </location>
</feature>
<feature type="compositionally biased region" description="Basic and acidic residues" evidence="4">
    <location>
        <begin position="69"/>
        <end position="90"/>
    </location>
</feature>
<feature type="compositionally biased region" description="Basic and acidic residues" evidence="4">
    <location>
        <begin position="159"/>
        <end position="177"/>
    </location>
</feature>
<feature type="binding site" evidence="3">
    <location>
        <position position="366"/>
    </location>
    <ligand>
        <name>Zn(2+)</name>
        <dbReference type="ChEBI" id="CHEBI:29105"/>
        <label>1</label>
    </ligand>
</feature>
<feature type="binding site" evidence="3">
    <location>
        <position position="371"/>
    </location>
    <ligand>
        <name>Zn(2+)</name>
        <dbReference type="ChEBI" id="CHEBI:29105"/>
        <label>1</label>
    </ligand>
</feature>
<feature type="binding site" evidence="3">
    <location>
        <position position="384"/>
    </location>
    <ligand>
        <name>Zn(2+)</name>
        <dbReference type="ChEBI" id="CHEBI:29105"/>
        <label>1</label>
    </ligand>
</feature>
<feature type="binding site" evidence="3">
    <location>
        <position position="390"/>
    </location>
    <ligand>
        <name>Zn(2+)</name>
        <dbReference type="ChEBI" id="CHEBI:29105"/>
        <label>1</label>
    </ligand>
</feature>
<feature type="binding site" evidence="3">
    <location>
        <position position="410"/>
    </location>
    <ligand>
        <name>Zn(2+)</name>
        <dbReference type="ChEBI" id="CHEBI:29105"/>
        <label>2</label>
    </ligand>
</feature>
<feature type="binding site" evidence="3">
    <location>
        <position position="415"/>
    </location>
    <ligand>
        <name>Zn(2+)</name>
        <dbReference type="ChEBI" id="CHEBI:29105"/>
        <label>2</label>
    </ligand>
</feature>
<feature type="binding site" evidence="3">
    <location>
        <position position="428"/>
    </location>
    <ligand>
        <name>Zn(2+)</name>
        <dbReference type="ChEBI" id="CHEBI:29105"/>
        <label>2</label>
    </ligand>
</feature>
<feature type="binding site" evidence="3">
    <location>
        <position position="434"/>
    </location>
    <ligand>
        <name>Zn(2+)</name>
        <dbReference type="ChEBI" id="CHEBI:29105"/>
        <label>2</label>
    </ligand>
</feature>
<feature type="binding site" evidence="3">
    <location>
        <position position="722"/>
    </location>
    <ligand>
        <name>Zn(2+)</name>
        <dbReference type="ChEBI" id="CHEBI:29105"/>
        <label>3</label>
    </ligand>
</feature>
<feature type="binding site" evidence="3">
    <location>
        <position position="727"/>
    </location>
    <ligand>
        <name>Zn(2+)</name>
        <dbReference type="ChEBI" id="CHEBI:29105"/>
        <label>3</label>
    </ligand>
</feature>
<feature type="binding site" evidence="3">
    <location>
        <position position="740"/>
    </location>
    <ligand>
        <name>Zn(2+)</name>
        <dbReference type="ChEBI" id="CHEBI:29105"/>
        <label>3</label>
    </ligand>
</feature>
<feature type="binding site" evidence="3">
    <location>
        <position position="746"/>
    </location>
    <ligand>
        <name>Zn(2+)</name>
        <dbReference type="ChEBI" id="CHEBI:29105"/>
        <label>3</label>
    </ligand>
</feature>
<feature type="binding site" evidence="3">
    <location>
        <position position="766"/>
    </location>
    <ligand>
        <name>Zn(2+)</name>
        <dbReference type="ChEBI" id="CHEBI:29105"/>
        <label>4</label>
    </ligand>
</feature>
<feature type="binding site" evidence="3">
    <location>
        <position position="771"/>
    </location>
    <ligand>
        <name>Zn(2+)</name>
        <dbReference type="ChEBI" id="CHEBI:29105"/>
        <label>4</label>
    </ligand>
</feature>
<feature type="binding site" evidence="3">
    <location>
        <position position="784"/>
    </location>
    <ligand>
        <name>Zn(2+)</name>
        <dbReference type="ChEBI" id="CHEBI:29105"/>
        <label>4</label>
    </ligand>
</feature>
<feature type="binding site" evidence="3">
    <location>
        <position position="790"/>
    </location>
    <ligand>
        <name>Zn(2+)</name>
        <dbReference type="ChEBI" id="CHEBI:29105"/>
        <label>4</label>
    </ligand>
</feature>
<feature type="binding site" evidence="3">
    <location>
        <position position="814"/>
    </location>
    <ligand>
        <name>Zn(2+)</name>
        <dbReference type="ChEBI" id="CHEBI:29105"/>
        <label>5</label>
    </ligand>
</feature>
<feature type="binding site" evidence="3">
    <location>
        <position position="819"/>
    </location>
    <ligand>
        <name>Zn(2+)</name>
        <dbReference type="ChEBI" id="CHEBI:29105"/>
        <label>5</label>
    </ligand>
</feature>
<feature type="binding site" evidence="3">
    <location>
        <position position="832"/>
    </location>
    <ligand>
        <name>Zn(2+)</name>
        <dbReference type="ChEBI" id="CHEBI:29105"/>
        <label>5</label>
    </ligand>
</feature>
<feature type="binding site" evidence="3">
    <location>
        <position position="838"/>
    </location>
    <ligand>
        <name>Zn(2+)</name>
        <dbReference type="ChEBI" id="CHEBI:29105"/>
        <label>5</label>
    </ligand>
</feature>
<feature type="binding site" evidence="3">
    <location>
        <position position="867"/>
    </location>
    <ligand>
        <name>Zn(2+)</name>
        <dbReference type="ChEBI" id="CHEBI:29105"/>
        <label>6</label>
    </ligand>
</feature>
<feature type="binding site" evidence="3">
    <location>
        <position position="872"/>
    </location>
    <ligand>
        <name>Zn(2+)</name>
        <dbReference type="ChEBI" id="CHEBI:29105"/>
        <label>6</label>
    </ligand>
</feature>
<feature type="binding site" evidence="3">
    <location>
        <position position="885"/>
    </location>
    <ligand>
        <name>Zn(2+)</name>
        <dbReference type="ChEBI" id="CHEBI:29105"/>
        <label>6</label>
    </ligand>
</feature>
<feature type="binding site" evidence="3">
    <location>
        <position position="891"/>
    </location>
    <ligand>
        <name>Zn(2+)</name>
        <dbReference type="ChEBI" id="CHEBI:29105"/>
        <label>6</label>
    </ligand>
</feature>
<feature type="sequence conflict" description="In Ref. 3; BAE24709." evidence="5" ref="3">
    <original>S</original>
    <variation>R</variation>
    <location>
        <position position="198"/>
    </location>
</feature>
<feature type="sequence conflict" description="In Ref. 3; BAE27844/BAE28057." evidence="5" ref="3">
    <original>D</original>
    <variation>N</variation>
    <location>
        <position position="229"/>
    </location>
</feature>
<feature type="sequence conflict" description="In Ref. 3; BAE23351." evidence="5" ref="3">
    <original>E</original>
    <variation>D</variation>
    <location>
        <position position="493"/>
    </location>
</feature>
<feature type="sequence conflict" description="In Ref. 3; BAE23351." evidence="5" ref="3">
    <original>N</original>
    <variation>D</variation>
    <location>
        <position position="736"/>
    </location>
</feature>
<protein>
    <recommendedName>
        <fullName>Suppression of tumorigenicity 18 protein</fullName>
    </recommendedName>
</protein>
<accession>Q80TY4</accession>
<accession>Q3UH00</accession>
<accession>Q3URH9</accession>
<accession>Q3UVB9</accession>
<accession>Q3UZN9</accession>
<accession>Q811B4</accession>
<accession>Q8K098</accession>
<name>ST18_MOUSE</name>
<organism>
    <name type="scientific">Mus musculus</name>
    <name type="common">Mouse</name>
    <dbReference type="NCBI Taxonomy" id="10090"/>
    <lineage>
        <taxon>Eukaryota</taxon>
        <taxon>Metazoa</taxon>
        <taxon>Chordata</taxon>
        <taxon>Craniata</taxon>
        <taxon>Vertebrata</taxon>
        <taxon>Euteleostomi</taxon>
        <taxon>Mammalia</taxon>
        <taxon>Eutheria</taxon>
        <taxon>Euarchontoglires</taxon>
        <taxon>Glires</taxon>
        <taxon>Rodentia</taxon>
        <taxon>Myomorpha</taxon>
        <taxon>Muroidea</taxon>
        <taxon>Muridae</taxon>
        <taxon>Murinae</taxon>
        <taxon>Mus</taxon>
        <taxon>Mus</taxon>
    </lineage>
</organism>
<comment type="function">
    <text evidence="1">Repressor that binds to DNA sequences containing a bipartite element consisting of a direct repeat of the sequence 5'-AAAGTTT-3' separated by 2-9 nucleotides. Represses basal transcription activity from target promoters (By similarity).</text>
</comment>
<comment type="subcellular location">
    <subcellularLocation>
        <location evidence="1">Nucleus</location>
    </subcellularLocation>
</comment>
<comment type="similarity">
    <text evidence="5">Belongs to the MYT1 family.</text>
</comment>
<comment type="sequence caution" evidence="5">
    <conflict type="erroneous initiation">
        <sequence resource="EMBL-CDS" id="AAH32273"/>
    </conflict>
</comment>
<comment type="sequence caution" evidence="5">
    <conflict type="erroneous initiation">
        <sequence resource="EMBL-CDS" id="BAC65585"/>
    </conflict>
</comment>
<evidence type="ECO:0000250" key="1"/>
<evidence type="ECO:0000255" key="2"/>
<evidence type="ECO:0000255" key="3">
    <source>
        <dbReference type="PROSITE-ProRule" id="PRU01143"/>
    </source>
</evidence>
<evidence type="ECO:0000256" key="4">
    <source>
        <dbReference type="SAM" id="MobiDB-lite"/>
    </source>
</evidence>
<evidence type="ECO:0000305" key="5"/>